<feature type="chain" id="PRO_0000243047" description="Large ribosomal subunit protein uL5">
    <location>
        <begin position="1"/>
        <end position="178"/>
    </location>
</feature>
<organism>
    <name type="scientific">Psychrobacter cryohalolentis (strain ATCC BAA-1226 / DSM 17306 / VKM B-2378 / K5)</name>
    <dbReference type="NCBI Taxonomy" id="335284"/>
    <lineage>
        <taxon>Bacteria</taxon>
        <taxon>Pseudomonadati</taxon>
        <taxon>Pseudomonadota</taxon>
        <taxon>Gammaproteobacteria</taxon>
        <taxon>Moraxellales</taxon>
        <taxon>Moraxellaceae</taxon>
        <taxon>Psychrobacter</taxon>
    </lineage>
</organism>
<protein>
    <recommendedName>
        <fullName evidence="1">Large ribosomal subunit protein uL5</fullName>
    </recommendedName>
    <alternativeName>
        <fullName evidence="2">50S ribosomal protein L5</fullName>
    </alternativeName>
</protein>
<evidence type="ECO:0000255" key="1">
    <source>
        <dbReference type="HAMAP-Rule" id="MF_01333"/>
    </source>
</evidence>
<evidence type="ECO:0000305" key="2"/>
<proteinExistence type="inferred from homology"/>
<gene>
    <name evidence="1" type="primary">rplE</name>
    <name type="ordered locus">Pcryo_0496</name>
</gene>
<accession>Q1QDH4</accession>
<sequence length="178" mass="19869">MARLKSLYNEELKQQIKEELGLANVMQVPKITKITLNMGVGGASQDKKLLEGAVADMTAIAGQKPVVTKARKSVAGFKIREEWPIGCKVTLRGEQMYEFLDRLIAIAIPRIRDFRGFSPKAFDGRGNYSLGIKEQIVFPEVDFDKIDRIRGMDVTITTSAQSDEEGRALLKAFGFPFK</sequence>
<reference key="1">
    <citation type="submission" date="2006-03" db="EMBL/GenBank/DDBJ databases">
        <title>Complete sequence of chromosome of Psychrobacter cryohalolentis K5.</title>
        <authorList>
            <consortium name="US DOE Joint Genome Institute"/>
            <person name="Copeland A."/>
            <person name="Lucas S."/>
            <person name="Lapidus A."/>
            <person name="Barry K."/>
            <person name="Detter J.C."/>
            <person name="Glavina T."/>
            <person name="Hammon N."/>
            <person name="Israni S."/>
            <person name="Dalin E."/>
            <person name="Tice H."/>
            <person name="Pitluck S."/>
            <person name="Brettin T."/>
            <person name="Bruce D."/>
            <person name="Han C."/>
            <person name="Tapia R."/>
            <person name="Sims D.R."/>
            <person name="Gilna P."/>
            <person name="Schmutz J."/>
            <person name="Larimer F."/>
            <person name="Land M."/>
            <person name="Hauser L."/>
            <person name="Kyrpides N."/>
            <person name="Kim E."/>
            <person name="Richardson P."/>
        </authorList>
    </citation>
    <scope>NUCLEOTIDE SEQUENCE [LARGE SCALE GENOMIC DNA]</scope>
    <source>
        <strain>ATCC BAA-1226 / DSM 17306 / VKM B-2378 / K5</strain>
    </source>
</reference>
<dbReference type="EMBL" id="CP000323">
    <property type="protein sequence ID" value="ABE74279.1"/>
    <property type="molecule type" value="Genomic_DNA"/>
</dbReference>
<dbReference type="RefSeq" id="WP_011512858.1">
    <property type="nucleotide sequence ID" value="NC_007969.1"/>
</dbReference>
<dbReference type="SMR" id="Q1QDH4"/>
<dbReference type="STRING" id="335284.Pcryo_0496"/>
<dbReference type="GeneID" id="60255475"/>
<dbReference type="KEGG" id="pcr:Pcryo_0496"/>
<dbReference type="eggNOG" id="COG0094">
    <property type="taxonomic scope" value="Bacteria"/>
</dbReference>
<dbReference type="HOGENOM" id="CLU_061015_2_1_6"/>
<dbReference type="Proteomes" id="UP000002425">
    <property type="component" value="Chromosome"/>
</dbReference>
<dbReference type="GO" id="GO:1990904">
    <property type="term" value="C:ribonucleoprotein complex"/>
    <property type="evidence" value="ECO:0007669"/>
    <property type="project" value="UniProtKB-KW"/>
</dbReference>
<dbReference type="GO" id="GO:0005840">
    <property type="term" value="C:ribosome"/>
    <property type="evidence" value="ECO:0007669"/>
    <property type="project" value="UniProtKB-KW"/>
</dbReference>
<dbReference type="GO" id="GO:0019843">
    <property type="term" value="F:rRNA binding"/>
    <property type="evidence" value="ECO:0007669"/>
    <property type="project" value="UniProtKB-UniRule"/>
</dbReference>
<dbReference type="GO" id="GO:0003735">
    <property type="term" value="F:structural constituent of ribosome"/>
    <property type="evidence" value="ECO:0007669"/>
    <property type="project" value="InterPro"/>
</dbReference>
<dbReference type="GO" id="GO:0000049">
    <property type="term" value="F:tRNA binding"/>
    <property type="evidence" value="ECO:0007669"/>
    <property type="project" value="UniProtKB-UniRule"/>
</dbReference>
<dbReference type="GO" id="GO:0006412">
    <property type="term" value="P:translation"/>
    <property type="evidence" value="ECO:0007669"/>
    <property type="project" value="UniProtKB-UniRule"/>
</dbReference>
<dbReference type="FunFam" id="3.30.1440.10:FF:000001">
    <property type="entry name" value="50S ribosomal protein L5"/>
    <property type="match status" value="1"/>
</dbReference>
<dbReference type="Gene3D" id="3.30.1440.10">
    <property type="match status" value="1"/>
</dbReference>
<dbReference type="HAMAP" id="MF_01333_B">
    <property type="entry name" value="Ribosomal_uL5_B"/>
    <property type="match status" value="1"/>
</dbReference>
<dbReference type="InterPro" id="IPR002132">
    <property type="entry name" value="Ribosomal_uL5"/>
</dbReference>
<dbReference type="InterPro" id="IPR020930">
    <property type="entry name" value="Ribosomal_uL5_bac-type"/>
</dbReference>
<dbReference type="InterPro" id="IPR031309">
    <property type="entry name" value="Ribosomal_uL5_C"/>
</dbReference>
<dbReference type="InterPro" id="IPR020929">
    <property type="entry name" value="Ribosomal_uL5_CS"/>
</dbReference>
<dbReference type="InterPro" id="IPR022803">
    <property type="entry name" value="Ribosomal_uL5_dom_sf"/>
</dbReference>
<dbReference type="InterPro" id="IPR031310">
    <property type="entry name" value="Ribosomal_uL5_N"/>
</dbReference>
<dbReference type="NCBIfam" id="NF000585">
    <property type="entry name" value="PRK00010.1"/>
    <property type="match status" value="1"/>
</dbReference>
<dbReference type="PANTHER" id="PTHR11994">
    <property type="entry name" value="60S RIBOSOMAL PROTEIN L11-RELATED"/>
    <property type="match status" value="1"/>
</dbReference>
<dbReference type="Pfam" id="PF00281">
    <property type="entry name" value="Ribosomal_L5"/>
    <property type="match status" value="1"/>
</dbReference>
<dbReference type="Pfam" id="PF00673">
    <property type="entry name" value="Ribosomal_L5_C"/>
    <property type="match status" value="1"/>
</dbReference>
<dbReference type="PIRSF" id="PIRSF002161">
    <property type="entry name" value="Ribosomal_L5"/>
    <property type="match status" value="1"/>
</dbReference>
<dbReference type="SUPFAM" id="SSF55282">
    <property type="entry name" value="RL5-like"/>
    <property type="match status" value="1"/>
</dbReference>
<dbReference type="PROSITE" id="PS00358">
    <property type="entry name" value="RIBOSOMAL_L5"/>
    <property type="match status" value="1"/>
</dbReference>
<name>RL5_PSYCK</name>
<keyword id="KW-0687">Ribonucleoprotein</keyword>
<keyword id="KW-0689">Ribosomal protein</keyword>
<keyword id="KW-0694">RNA-binding</keyword>
<keyword id="KW-0699">rRNA-binding</keyword>
<keyword id="KW-0820">tRNA-binding</keyword>
<comment type="function">
    <text evidence="1">This is one of the proteins that bind and probably mediate the attachment of the 5S RNA into the large ribosomal subunit, where it forms part of the central protuberance. In the 70S ribosome it contacts protein S13 of the 30S subunit (bridge B1b), connecting the 2 subunits; this bridge is implicated in subunit movement. Contacts the P site tRNA; the 5S rRNA and some of its associated proteins might help stabilize positioning of ribosome-bound tRNAs.</text>
</comment>
<comment type="subunit">
    <text evidence="1">Part of the 50S ribosomal subunit; part of the 5S rRNA/L5/L18/L25 subcomplex. Contacts the 5S rRNA and the P site tRNA. Forms a bridge to the 30S subunit in the 70S ribosome.</text>
</comment>
<comment type="similarity">
    <text evidence="1">Belongs to the universal ribosomal protein uL5 family.</text>
</comment>